<comment type="similarity">
    <text evidence="1">Belongs to the UPF0225 family.</text>
</comment>
<organism>
    <name type="scientific">Shigella boydii serotype 18 (strain CDC 3083-94 / BS512)</name>
    <dbReference type="NCBI Taxonomy" id="344609"/>
    <lineage>
        <taxon>Bacteria</taxon>
        <taxon>Pseudomonadati</taxon>
        <taxon>Pseudomonadota</taxon>
        <taxon>Gammaproteobacteria</taxon>
        <taxon>Enterobacterales</taxon>
        <taxon>Enterobacteriaceae</taxon>
        <taxon>Shigella</taxon>
    </lineage>
</organism>
<reference key="1">
    <citation type="submission" date="2008-05" db="EMBL/GenBank/DDBJ databases">
        <title>Complete sequence of Shigella boydii serotype 18 strain BS512.</title>
        <authorList>
            <person name="Rasko D.A."/>
            <person name="Rosovitz M."/>
            <person name="Maurelli A.T."/>
            <person name="Myers G."/>
            <person name="Seshadri R."/>
            <person name="Cer R."/>
            <person name="Jiang L."/>
            <person name="Ravel J."/>
            <person name="Sebastian Y."/>
        </authorList>
    </citation>
    <scope>NUCLEOTIDE SEQUENCE [LARGE SCALE GENOMIC DNA]</scope>
    <source>
        <strain>CDC 3083-94 / BS512</strain>
    </source>
</reference>
<dbReference type="EMBL" id="CP001063">
    <property type="protein sequence ID" value="ACD08582.1"/>
    <property type="molecule type" value="Genomic_DNA"/>
</dbReference>
<dbReference type="RefSeq" id="WP_001307143.1">
    <property type="nucleotide sequence ID" value="NC_010658.1"/>
</dbReference>
<dbReference type="SMR" id="B2TZX7"/>
<dbReference type="STRING" id="344609.SbBS512_E1398"/>
<dbReference type="KEGG" id="sbc:SbBS512_E1398"/>
<dbReference type="HOGENOM" id="CLU_099590_0_0_6"/>
<dbReference type="Proteomes" id="UP000001030">
    <property type="component" value="Chromosome"/>
</dbReference>
<dbReference type="Gene3D" id="3.10.450.50">
    <property type="match status" value="1"/>
</dbReference>
<dbReference type="HAMAP" id="MF_00612">
    <property type="entry name" value="UPF0225"/>
    <property type="match status" value="1"/>
</dbReference>
<dbReference type="InterPro" id="IPR032710">
    <property type="entry name" value="NTF2-like_dom_sf"/>
</dbReference>
<dbReference type="InterPro" id="IPR004027">
    <property type="entry name" value="SEC_C_motif"/>
</dbReference>
<dbReference type="InterPro" id="IPR023006">
    <property type="entry name" value="UPF0225"/>
</dbReference>
<dbReference type="InterPro" id="IPR048469">
    <property type="entry name" value="YchJ-like_M"/>
</dbReference>
<dbReference type="NCBIfam" id="NF002449">
    <property type="entry name" value="PRK01617.1"/>
    <property type="match status" value="1"/>
</dbReference>
<dbReference type="NCBIfam" id="NF002486">
    <property type="entry name" value="PRK01752.1"/>
    <property type="match status" value="1"/>
</dbReference>
<dbReference type="PANTHER" id="PTHR33747:SF1">
    <property type="entry name" value="ADENYLATE CYCLASE-ASSOCIATED CAP C-TERMINAL DOMAIN-CONTAINING PROTEIN"/>
    <property type="match status" value="1"/>
</dbReference>
<dbReference type="PANTHER" id="PTHR33747">
    <property type="entry name" value="UPF0225 PROTEIN SCO1677"/>
    <property type="match status" value="1"/>
</dbReference>
<dbReference type="Pfam" id="PF02810">
    <property type="entry name" value="SEC-C"/>
    <property type="match status" value="2"/>
</dbReference>
<dbReference type="Pfam" id="PF17775">
    <property type="entry name" value="YchJ_M-like"/>
    <property type="match status" value="1"/>
</dbReference>
<dbReference type="SUPFAM" id="SSF54427">
    <property type="entry name" value="NTF2-like"/>
    <property type="match status" value="1"/>
</dbReference>
<dbReference type="SUPFAM" id="SSF103642">
    <property type="entry name" value="Sec-C motif"/>
    <property type="match status" value="1"/>
</dbReference>
<name>YCHJ_SHIB3</name>
<proteinExistence type="inferred from homology"/>
<evidence type="ECO:0000255" key="1">
    <source>
        <dbReference type="HAMAP-Rule" id="MF_00612"/>
    </source>
</evidence>
<accession>B2TZX7</accession>
<protein>
    <recommendedName>
        <fullName evidence="1">UPF0225 protein YchJ</fullName>
    </recommendedName>
</protein>
<feature type="chain" id="PRO_1000130395" description="UPF0225 protein YchJ">
    <location>
        <begin position="1"/>
        <end position="152"/>
    </location>
</feature>
<gene>
    <name evidence="1" type="primary">ychJ</name>
    <name type="ordered locus">SbBS512_E1398</name>
</gene>
<keyword id="KW-1185">Reference proteome</keyword>
<sequence length="152" mass="16990">MSQLCPCGSAVEYSLCCHPYVSGEKVAPDPEHLMRSRYCAFVMQDADYLIKTWHPSCGAAALRAELMAGFAHTEWLGLTVFEHCWQDADNIGFVSFVARFTEGGKTGAIIERSRFLKENGQWYYIDGTRPQFGRNDPCPCGSGKKFKKCCGQ</sequence>